<keyword id="KW-0007">Acetylation</keyword>
<keyword id="KW-0143">Chaperone</keyword>
<keyword id="KW-0963">Cytoplasm</keyword>
<keyword id="KW-0903">Direct protein sequencing</keyword>
<keyword id="KW-0273">Eye lens protein</keyword>
<keyword id="KW-0325">Glycoprotein</keyword>
<keyword id="KW-0479">Metal-binding</keyword>
<keyword id="KW-0488">Methylation</keyword>
<keyword id="KW-0539">Nucleus</keyword>
<keyword id="KW-0597">Phosphoprotein</keyword>
<keyword id="KW-1185">Reference proteome</keyword>
<keyword id="KW-0862">Zinc</keyword>
<feature type="chain" id="PRO_0000125873" description="Alpha-crystallin A chain">
    <location>
        <begin position="1"/>
        <end position="173"/>
    </location>
</feature>
<feature type="domain" description="sHSP" evidence="5">
    <location>
        <begin position="52"/>
        <end position="162"/>
    </location>
</feature>
<feature type="region of interest" description="Required for complex formation with BFSP1 and BFSP2" evidence="4">
    <location>
        <begin position="1"/>
        <end position="63"/>
    </location>
</feature>
<feature type="region of interest" description="Disordered" evidence="6">
    <location>
        <begin position="144"/>
        <end position="173"/>
    </location>
</feature>
<feature type="compositionally biased region" description="Basic and acidic residues" evidence="6">
    <location>
        <begin position="153"/>
        <end position="167"/>
    </location>
</feature>
<feature type="binding site" evidence="2">
    <location>
        <position position="100"/>
    </location>
    <ligand>
        <name>Zn(2+)</name>
        <dbReference type="ChEBI" id="CHEBI:29105"/>
        <label>1</label>
    </ligand>
</feature>
<feature type="binding site" evidence="2">
    <location>
        <position position="102"/>
    </location>
    <ligand>
        <name>Zn(2+)</name>
        <dbReference type="ChEBI" id="CHEBI:29105"/>
        <label>1</label>
    </ligand>
</feature>
<feature type="binding site" evidence="2">
    <location>
        <position position="107"/>
    </location>
    <ligand>
        <name>Zn(2+)</name>
        <dbReference type="ChEBI" id="CHEBI:29105"/>
        <label>2</label>
    </ligand>
</feature>
<feature type="binding site" evidence="2">
    <location>
        <position position="154"/>
    </location>
    <ligand>
        <name>Zn(2+)</name>
        <dbReference type="ChEBI" id="CHEBI:29105"/>
        <label>3</label>
    </ligand>
</feature>
<feature type="modified residue" description="N-acetylmethionine" evidence="3 7">
    <location>
        <position position="1"/>
    </location>
</feature>
<feature type="modified residue" description="Deamidated glutamine; partial" evidence="1">
    <location>
        <position position="6"/>
    </location>
</feature>
<feature type="modified residue" description="Phosphoserine" evidence="4">
    <location>
        <position position="45"/>
    </location>
</feature>
<feature type="modified residue" description="Deamidated glutamine; partial" evidence="1">
    <location>
        <position position="50"/>
    </location>
</feature>
<feature type="modified residue" description="N6-acetyllysine" evidence="4">
    <location>
        <position position="70"/>
    </location>
</feature>
<feature type="modified residue" description="N6-acetyllysine" evidence="4">
    <location>
        <position position="99"/>
    </location>
</feature>
<feature type="modified residue" description="Deamidated asparagine; partial" evidence="1">
    <location>
        <position position="101"/>
    </location>
</feature>
<feature type="modified residue" description="Phosphoserine" evidence="2">
    <location>
        <position position="122"/>
    </location>
</feature>
<feature type="modified residue" description="Deamidated asparagine; partial" evidence="1">
    <location>
        <position position="123"/>
    </location>
</feature>
<feature type="glycosylation site" description="O-linked (GlcNAc) serine" evidence="1">
    <location>
        <position position="162"/>
    </location>
</feature>
<dbReference type="PIR" id="A02885">
    <property type="entry name" value="CYMNAA"/>
</dbReference>
<dbReference type="RefSeq" id="XP_044106779.1">
    <property type="nucleotide sequence ID" value="XM_044250844.1"/>
</dbReference>
<dbReference type="SMR" id="P02483"/>
<dbReference type="GlyCosmos" id="P02483">
    <property type="glycosylation" value="1 site, No reported glycans"/>
</dbReference>
<dbReference type="Ensembl" id="ENSNVIT00000009376.1">
    <property type="protein sequence ID" value="ENSNVIP00000008002.1"/>
    <property type="gene ID" value="ENSNVIG00000006345.1"/>
</dbReference>
<dbReference type="GeneID" id="122908256"/>
<dbReference type="GeneTree" id="ENSGT00940000160159"/>
<dbReference type="Proteomes" id="UP000694425">
    <property type="component" value="Unplaced"/>
</dbReference>
<dbReference type="GO" id="GO:0005737">
    <property type="term" value="C:cytoplasm"/>
    <property type="evidence" value="ECO:0000250"/>
    <property type="project" value="UniProtKB"/>
</dbReference>
<dbReference type="GO" id="GO:0005829">
    <property type="term" value="C:cytosol"/>
    <property type="evidence" value="ECO:0007669"/>
    <property type="project" value="Ensembl"/>
</dbReference>
<dbReference type="GO" id="GO:0005654">
    <property type="term" value="C:nucleoplasm"/>
    <property type="evidence" value="ECO:0007669"/>
    <property type="project" value="Ensembl"/>
</dbReference>
<dbReference type="GO" id="GO:0005634">
    <property type="term" value="C:nucleus"/>
    <property type="evidence" value="ECO:0000250"/>
    <property type="project" value="UniProtKB"/>
</dbReference>
<dbReference type="GO" id="GO:0032991">
    <property type="term" value="C:protein-containing complex"/>
    <property type="evidence" value="ECO:0007669"/>
    <property type="project" value="Ensembl"/>
</dbReference>
<dbReference type="GO" id="GO:0042802">
    <property type="term" value="F:identical protein binding"/>
    <property type="evidence" value="ECO:0007669"/>
    <property type="project" value="Ensembl"/>
</dbReference>
<dbReference type="GO" id="GO:0046872">
    <property type="term" value="F:metal ion binding"/>
    <property type="evidence" value="ECO:0007669"/>
    <property type="project" value="UniProtKB-KW"/>
</dbReference>
<dbReference type="GO" id="GO:0005212">
    <property type="term" value="F:structural constituent of eye lens"/>
    <property type="evidence" value="ECO:0007669"/>
    <property type="project" value="UniProtKB-KW"/>
</dbReference>
<dbReference type="GO" id="GO:0051082">
    <property type="term" value="F:unfolded protein binding"/>
    <property type="evidence" value="ECO:0007669"/>
    <property type="project" value="Ensembl"/>
</dbReference>
<dbReference type="GO" id="GO:0007015">
    <property type="term" value="P:actin filament organization"/>
    <property type="evidence" value="ECO:0007669"/>
    <property type="project" value="Ensembl"/>
</dbReference>
<dbReference type="GO" id="GO:0060561">
    <property type="term" value="P:apoptotic process involved in morphogenesis"/>
    <property type="evidence" value="ECO:0007669"/>
    <property type="project" value="Ensembl"/>
</dbReference>
<dbReference type="GO" id="GO:0048596">
    <property type="term" value="P:embryonic camera-type eye morphogenesis"/>
    <property type="evidence" value="ECO:0007669"/>
    <property type="project" value="Ensembl"/>
</dbReference>
<dbReference type="GO" id="GO:0070309">
    <property type="term" value="P:lens fiber cell morphogenesis"/>
    <property type="evidence" value="ECO:0007669"/>
    <property type="project" value="Ensembl"/>
</dbReference>
<dbReference type="GO" id="GO:0007017">
    <property type="term" value="P:microtubule-based process"/>
    <property type="evidence" value="ECO:0007669"/>
    <property type="project" value="Ensembl"/>
</dbReference>
<dbReference type="GO" id="GO:0007005">
    <property type="term" value="P:mitochondrion organization"/>
    <property type="evidence" value="ECO:0007669"/>
    <property type="project" value="Ensembl"/>
</dbReference>
<dbReference type="GO" id="GO:0043066">
    <property type="term" value="P:negative regulation of apoptotic process"/>
    <property type="evidence" value="ECO:0007669"/>
    <property type="project" value="Ensembl"/>
</dbReference>
<dbReference type="GO" id="GO:0010629">
    <property type="term" value="P:negative regulation of gene expression"/>
    <property type="evidence" value="ECO:0007669"/>
    <property type="project" value="Ensembl"/>
</dbReference>
<dbReference type="GO" id="GO:0032387">
    <property type="term" value="P:negative regulation of intracellular transport"/>
    <property type="evidence" value="ECO:0007669"/>
    <property type="project" value="Ensembl"/>
</dbReference>
<dbReference type="GO" id="GO:0030307">
    <property type="term" value="P:positive regulation of cell growth"/>
    <property type="evidence" value="ECO:0007669"/>
    <property type="project" value="Ensembl"/>
</dbReference>
<dbReference type="GO" id="GO:0042026">
    <property type="term" value="P:protein refolding"/>
    <property type="evidence" value="ECO:0007669"/>
    <property type="project" value="TreeGrafter"/>
</dbReference>
<dbReference type="GO" id="GO:0050821">
    <property type="term" value="P:protein stabilization"/>
    <property type="evidence" value="ECO:0007669"/>
    <property type="project" value="Ensembl"/>
</dbReference>
<dbReference type="GO" id="GO:0009408">
    <property type="term" value="P:response to heat"/>
    <property type="evidence" value="ECO:0007669"/>
    <property type="project" value="TreeGrafter"/>
</dbReference>
<dbReference type="GO" id="GO:0042542">
    <property type="term" value="P:response to hydrogen peroxide"/>
    <property type="evidence" value="ECO:0007669"/>
    <property type="project" value="Ensembl"/>
</dbReference>
<dbReference type="GO" id="GO:0001666">
    <property type="term" value="P:response to hypoxia"/>
    <property type="evidence" value="ECO:0007669"/>
    <property type="project" value="Ensembl"/>
</dbReference>
<dbReference type="GO" id="GO:0070141">
    <property type="term" value="P:response to UV-A"/>
    <property type="evidence" value="ECO:0007669"/>
    <property type="project" value="Ensembl"/>
</dbReference>
<dbReference type="GO" id="GO:0007021">
    <property type="term" value="P:tubulin complex assembly"/>
    <property type="evidence" value="ECO:0007669"/>
    <property type="project" value="Ensembl"/>
</dbReference>
<dbReference type="GO" id="GO:0007601">
    <property type="term" value="P:visual perception"/>
    <property type="evidence" value="ECO:0007669"/>
    <property type="project" value="Ensembl"/>
</dbReference>
<dbReference type="CDD" id="cd06497">
    <property type="entry name" value="ACD_alphaA-crystallin_HspB4"/>
    <property type="match status" value="1"/>
</dbReference>
<dbReference type="FunFam" id="2.60.40.790:FF:000008">
    <property type="entry name" value="Alpha-crystallin A chain"/>
    <property type="match status" value="1"/>
</dbReference>
<dbReference type="Gene3D" id="2.60.40.790">
    <property type="match status" value="1"/>
</dbReference>
<dbReference type="InterPro" id="IPR002068">
    <property type="entry name" value="A-crystallin/Hsp20_dom"/>
</dbReference>
<dbReference type="InterPro" id="IPR055269">
    <property type="entry name" value="Alpha-crystallin/HSP_16"/>
</dbReference>
<dbReference type="InterPro" id="IPR001436">
    <property type="entry name" value="Alpha-crystallin/sHSP_animal"/>
</dbReference>
<dbReference type="InterPro" id="IPR003090">
    <property type="entry name" value="Alpha-crystallin_N"/>
</dbReference>
<dbReference type="InterPro" id="IPR008978">
    <property type="entry name" value="HSP20-like_chaperone"/>
</dbReference>
<dbReference type="PANTHER" id="PTHR45640:SF14">
    <property type="entry name" value="ALPHA-CRYSTALLIN A CHAIN"/>
    <property type="match status" value="1"/>
</dbReference>
<dbReference type="PANTHER" id="PTHR45640">
    <property type="entry name" value="HEAT SHOCK PROTEIN HSP-12.2-RELATED"/>
    <property type="match status" value="1"/>
</dbReference>
<dbReference type="Pfam" id="PF00525">
    <property type="entry name" value="Crystallin"/>
    <property type="match status" value="1"/>
</dbReference>
<dbReference type="Pfam" id="PF00011">
    <property type="entry name" value="HSP20"/>
    <property type="match status" value="1"/>
</dbReference>
<dbReference type="PIRSF" id="PIRSF036514">
    <property type="entry name" value="Sm_HSP_B1"/>
    <property type="match status" value="1"/>
</dbReference>
<dbReference type="PRINTS" id="PR00299">
    <property type="entry name" value="ACRYSTALLIN"/>
</dbReference>
<dbReference type="SUPFAM" id="SSF49764">
    <property type="entry name" value="HSP20-like chaperones"/>
    <property type="match status" value="1"/>
</dbReference>
<dbReference type="PROSITE" id="PS01031">
    <property type="entry name" value="SHSP"/>
    <property type="match status" value="1"/>
</dbReference>
<name>CRYAA_NEOVI</name>
<accession>P02483</accession>
<sequence>MDIAIQQPWFKRALGPFYPSRLFDQFFGEGLFEYDLMPFLSSTISPYYRQSLFRTVLDSGVSEVRSDRDKFVIFLDVKHFSPEDLTVKVLQDFVEIHGKHNERQDDHGYISREFHRRYRLPSNVDQSALSCSLSADGMLTFSGPKVPSGVDAGHSERAIPVSREEKPSSAPSS</sequence>
<evidence type="ECO:0000250" key="1"/>
<evidence type="ECO:0000250" key="2">
    <source>
        <dbReference type="UniProtKB" id="P02470"/>
    </source>
</evidence>
<evidence type="ECO:0000250" key="3">
    <source>
        <dbReference type="UniProtKB" id="P02474"/>
    </source>
</evidence>
<evidence type="ECO:0000250" key="4">
    <source>
        <dbReference type="UniProtKB" id="P02489"/>
    </source>
</evidence>
<evidence type="ECO:0000255" key="5">
    <source>
        <dbReference type="PROSITE-ProRule" id="PRU00285"/>
    </source>
</evidence>
<evidence type="ECO:0000256" key="6">
    <source>
        <dbReference type="SAM" id="MobiDB-lite"/>
    </source>
</evidence>
<evidence type="ECO:0000305" key="7"/>
<organism>
    <name type="scientific">Neovison vison</name>
    <name type="common">American mink</name>
    <name type="synonym">Mustela vison</name>
    <dbReference type="NCBI Taxonomy" id="452646"/>
    <lineage>
        <taxon>Eukaryota</taxon>
        <taxon>Metazoa</taxon>
        <taxon>Chordata</taxon>
        <taxon>Craniata</taxon>
        <taxon>Vertebrata</taxon>
        <taxon>Euteleostomi</taxon>
        <taxon>Mammalia</taxon>
        <taxon>Eutheria</taxon>
        <taxon>Laurasiatheria</taxon>
        <taxon>Carnivora</taxon>
        <taxon>Caniformia</taxon>
        <taxon>Musteloidea</taxon>
        <taxon>Mustelidae</taxon>
        <taxon>Mustelinae</taxon>
        <taxon>Neogale</taxon>
    </lineage>
</organism>
<reference key="1">
    <citation type="book" date="1980" name="Protides of the biological fluids, Proc. 28th colloquium">
        <title>Trends in the molecular evolution of alpha-crystallin.</title>
        <editorList>
            <person name="Peeters H."/>
        </editorList>
        <authorList>
            <person name="de Jong W.W."/>
            <person name="Zweers A."/>
            <person name="Goodman M."/>
        </authorList>
    </citation>
    <scope>PARTIAL PROTEIN SEQUENCE</scope>
</reference>
<gene>
    <name type="primary">CRYAA</name>
</gene>
<proteinExistence type="evidence at protein level"/>
<protein>
    <recommendedName>
        <fullName>Alpha-crystallin A chain</fullName>
    </recommendedName>
</protein>
<comment type="function">
    <text evidence="4">Contributes to the transparency and refractive index of the lens. Acts as a chaperone, preventing aggregation of various proteins under a wide range of stress conditions. Required for the correct formation of lens intermediate filaments as part of a complex composed of BFSP1, BFSP2 and CRYAA.</text>
</comment>
<comment type="subunit">
    <text evidence="2 4">Heteromer composed of three CRYAA and one CRYAB subunits. Inter-subunit bridging via zinc ions enhances stability, which is crucial as there is no protein turn over in the lens. Can also form homodimers and homotetramers (dimers of dimers) which serve as the building blocks of homooligomers (By similarity). Within homooligomers, the zinc-binding motif is created from residues of 3 different molecules. His-100 and Glu-102 from one molecule are ligands of the zinc ion, and His-107 and His-154 residues from additional molecules complete the site with tetrahedral coordination geometry (By similarity). Part of a complex required for lens intermediate filament formation composed of BFSP1, BFSP2 and CRYAA (By similarity).</text>
</comment>
<comment type="subcellular location">
    <subcellularLocation>
        <location evidence="4">Cytoplasm</location>
    </subcellularLocation>
    <subcellularLocation>
        <location evidence="4">Nucleus</location>
    </subcellularLocation>
    <text evidence="4">Translocates to the nucleus during heat shock and resides in sub-nuclear structures known as SC35 speckles or nuclear splicing speckles.</text>
</comment>
<comment type="PTM">
    <text evidence="4">Acetylation at Lys-70 may increase chaperone activity.</text>
</comment>
<comment type="PTM">
    <text evidence="4">Undergoes age-dependent proteolytical cleavage at the C-terminus.</text>
</comment>
<comment type="similarity">
    <text evidence="5">Belongs to the small heat shock protein (HSP20) family.</text>
</comment>